<reference key="1">
    <citation type="journal article" date="2000" name="Science">
        <title>The genome sequence of Drosophila melanogaster.</title>
        <authorList>
            <person name="Adams M.D."/>
            <person name="Celniker S.E."/>
            <person name="Holt R.A."/>
            <person name="Evans C.A."/>
            <person name="Gocayne J.D."/>
            <person name="Amanatides P.G."/>
            <person name="Scherer S.E."/>
            <person name="Li P.W."/>
            <person name="Hoskins R.A."/>
            <person name="Galle R.F."/>
            <person name="George R.A."/>
            <person name="Lewis S.E."/>
            <person name="Richards S."/>
            <person name="Ashburner M."/>
            <person name="Henderson S.N."/>
            <person name="Sutton G.G."/>
            <person name="Wortman J.R."/>
            <person name="Yandell M.D."/>
            <person name="Zhang Q."/>
            <person name="Chen L.X."/>
            <person name="Brandon R.C."/>
            <person name="Rogers Y.-H.C."/>
            <person name="Blazej R.G."/>
            <person name="Champe M."/>
            <person name="Pfeiffer B.D."/>
            <person name="Wan K.H."/>
            <person name="Doyle C."/>
            <person name="Baxter E.G."/>
            <person name="Helt G."/>
            <person name="Nelson C.R."/>
            <person name="Miklos G.L.G."/>
            <person name="Abril J.F."/>
            <person name="Agbayani A."/>
            <person name="An H.-J."/>
            <person name="Andrews-Pfannkoch C."/>
            <person name="Baldwin D."/>
            <person name="Ballew R.M."/>
            <person name="Basu A."/>
            <person name="Baxendale J."/>
            <person name="Bayraktaroglu L."/>
            <person name="Beasley E.M."/>
            <person name="Beeson K.Y."/>
            <person name="Benos P.V."/>
            <person name="Berman B.P."/>
            <person name="Bhandari D."/>
            <person name="Bolshakov S."/>
            <person name="Borkova D."/>
            <person name="Botchan M.R."/>
            <person name="Bouck J."/>
            <person name="Brokstein P."/>
            <person name="Brottier P."/>
            <person name="Burtis K.C."/>
            <person name="Busam D.A."/>
            <person name="Butler H."/>
            <person name="Cadieu E."/>
            <person name="Center A."/>
            <person name="Chandra I."/>
            <person name="Cherry J.M."/>
            <person name="Cawley S."/>
            <person name="Dahlke C."/>
            <person name="Davenport L.B."/>
            <person name="Davies P."/>
            <person name="de Pablos B."/>
            <person name="Delcher A."/>
            <person name="Deng Z."/>
            <person name="Mays A.D."/>
            <person name="Dew I."/>
            <person name="Dietz S.M."/>
            <person name="Dodson K."/>
            <person name="Doup L.E."/>
            <person name="Downes M."/>
            <person name="Dugan-Rocha S."/>
            <person name="Dunkov B.C."/>
            <person name="Dunn P."/>
            <person name="Durbin K.J."/>
            <person name="Evangelista C.C."/>
            <person name="Ferraz C."/>
            <person name="Ferriera S."/>
            <person name="Fleischmann W."/>
            <person name="Fosler C."/>
            <person name="Gabrielian A.E."/>
            <person name="Garg N.S."/>
            <person name="Gelbart W.M."/>
            <person name="Glasser K."/>
            <person name="Glodek A."/>
            <person name="Gong F."/>
            <person name="Gorrell J.H."/>
            <person name="Gu Z."/>
            <person name="Guan P."/>
            <person name="Harris M."/>
            <person name="Harris N.L."/>
            <person name="Harvey D.A."/>
            <person name="Heiman T.J."/>
            <person name="Hernandez J.R."/>
            <person name="Houck J."/>
            <person name="Hostin D."/>
            <person name="Houston K.A."/>
            <person name="Howland T.J."/>
            <person name="Wei M.-H."/>
            <person name="Ibegwam C."/>
            <person name="Jalali M."/>
            <person name="Kalush F."/>
            <person name="Karpen G.H."/>
            <person name="Ke Z."/>
            <person name="Kennison J.A."/>
            <person name="Ketchum K.A."/>
            <person name="Kimmel B.E."/>
            <person name="Kodira C.D."/>
            <person name="Kraft C.L."/>
            <person name="Kravitz S."/>
            <person name="Kulp D."/>
            <person name="Lai Z."/>
            <person name="Lasko P."/>
            <person name="Lei Y."/>
            <person name="Levitsky A.A."/>
            <person name="Li J.H."/>
            <person name="Li Z."/>
            <person name="Liang Y."/>
            <person name="Lin X."/>
            <person name="Liu X."/>
            <person name="Mattei B."/>
            <person name="McIntosh T.C."/>
            <person name="McLeod M.P."/>
            <person name="McPherson D."/>
            <person name="Merkulov G."/>
            <person name="Milshina N.V."/>
            <person name="Mobarry C."/>
            <person name="Morris J."/>
            <person name="Moshrefi A."/>
            <person name="Mount S.M."/>
            <person name="Moy M."/>
            <person name="Murphy B."/>
            <person name="Murphy L."/>
            <person name="Muzny D.M."/>
            <person name="Nelson D.L."/>
            <person name="Nelson D.R."/>
            <person name="Nelson K.A."/>
            <person name="Nixon K."/>
            <person name="Nusskern D.R."/>
            <person name="Pacleb J.M."/>
            <person name="Palazzolo M."/>
            <person name="Pittman G.S."/>
            <person name="Pan S."/>
            <person name="Pollard J."/>
            <person name="Puri V."/>
            <person name="Reese M.G."/>
            <person name="Reinert K."/>
            <person name="Remington K."/>
            <person name="Saunders R.D.C."/>
            <person name="Scheeler F."/>
            <person name="Shen H."/>
            <person name="Shue B.C."/>
            <person name="Siden-Kiamos I."/>
            <person name="Simpson M."/>
            <person name="Skupski M.P."/>
            <person name="Smith T.J."/>
            <person name="Spier E."/>
            <person name="Spradling A.C."/>
            <person name="Stapleton M."/>
            <person name="Strong R."/>
            <person name="Sun E."/>
            <person name="Svirskas R."/>
            <person name="Tector C."/>
            <person name="Turner R."/>
            <person name="Venter E."/>
            <person name="Wang A.H."/>
            <person name="Wang X."/>
            <person name="Wang Z.-Y."/>
            <person name="Wassarman D.A."/>
            <person name="Weinstock G.M."/>
            <person name="Weissenbach J."/>
            <person name="Williams S.M."/>
            <person name="Woodage T."/>
            <person name="Worley K.C."/>
            <person name="Wu D."/>
            <person name="Yang S."/>
            <person name="Yao Q.A."/>
            <person name="Ye J."/>
            <person name="Yeh R.-F."/>
            <person name="Zaveri J.S."/>
            <person name="Zhan M."/>
            <person name="Zhang G."/>
            <person name="Zhao Q."/>
            <person name="Zheng L."/>
            <person name="Zheng X.H."/>
            <person name="Zhong F.N."/>
            <person name="Zhong W."/>
            <person name="Zhou X."/>
            <person name="Zhu S.C."/>
            <person name="Zhu X."/>
            <person name="Smith H.O."/>
            <person name="Gibbs R.A."/>
            <person name="Myers E.W."/>
            <person name="Rubin G.M."/>
            <person name="Venter J.C."/>
        </authorList>
    </citation>
    <scope>NUCLEOTIDE SEQUENCE [LARGE SCALE GENOMIC DNA]</scope>
    <source>
        <strain>Berkeley</strain>
    </source>
</reference>
<reference key="2">
    <citation type="journal article" date="2002" name="Genome Biol.">
        <title>Annotation of the Drosophila melanogaster euchromatic genome: a systematic review.</title>
        <authorList>
            <person name="Misra S."/>
            <person name="Crosby M.A."/>
            <person name="Mungall C.J."/>
            <person name="Matthews B.B."/>
            <person name="Campbell K.S."/>
            <person name="Hradecky P."/>
            <person name="Huang Y."/>
            <person name="Kaminker J.S."/>
            <person name="Millburn G.H."/>
            <person name="Prochnik S.E."/>
            <person name="Smith C.D."/>
            <person name="Tupy J.L."/>
            <person name="Whitfield E.J."/>
            <person name="Bayraktaroglu L."/>
            <person name="Berman B.P."/>
            <person name="Bettencourt B.R."/>
            <person name="Celniker S.E."/>
            <person name="de Grey A.D.N.J."/>
            <person name="Drysdale R.A."/>
            <person name="Harris N.L."/>
            <person name="Richter J."/>
            <person name="Russo S."/>
            <person name="Schroeder A.J."/>
            <person name="Shu S.Q."/>
            <person name="Stapleton M."/>
            <person name="Yamada C."/>
            <person name="Ashburner M."/>
            <person name="Gelbart W.M."/>
            <person name="Rubin G.M."/>
            <person name="Lewis S.E."/>
        </authorList>
    </citation>
    <scope>GENOME REANNOTATION</scope>
    <source>
        <strain>Berkeley</strain>
    </source>
</reference>
<reference key="3">
    <citation type="journal article" date="2002" name="Genome Biol.">
        <title>A Drosophila full-length cDNA resource.</title>
        <authorList>
            <person name="Stapleton M."/>
            <person name="Carlson J.W."/>
            <person name="Brokstein P."/>
            <person name="Yu C."/>
            <person name="Champe M."/>
            <person name="George R.A."/>
            <person name="Guarin H."/>
            <person name="Kronmiller B."/>
            <person name="Pacleb J.M."/>
            <person name="Park S."/>
            <person name="Wan K.H."/>
            <person name="Rubin G.M."/>
            <person name="Celniker S.E."/>
        </authorList>
    </citation>
    <scope>NUCLEOTIDE SEQUENCE [LARGE SCALE MRNA]</scope>
    <source>
        <strain>Berkeley</strain>
        <tissue>Embryo</tissue>
    </source>
</reference>
<reference key="4">
    <citation type="journal article" date="2011" name="Glycobiology">
        <title>The Alg5 ortholog Wollknauel is essential for correct epidermal differentiation during Drosophila late embryogenesis.</title>
        <authorList>
            <person name="Shaik K.S."/>
            <person name="Pabst M."/>
            <person name="Schwarz H."/>
            <person name="Altmann F."/>
            <person name="Moussian B."/>
        </authorList>
    </citation>
    <scope>FUNCTION</scope>
    <scope>DISRUPTION PHENOTYPE</scope>
</reference>
<accession>Q9VKX7</accession>
<accession>Q960Z1</accession>
<gene>
    <name type="primary">gny</name>
    <name type="synonym">Alg6</name>
    <name type="ORF">CG5091</name>
</gene>
<name>ALG6_DROME</name>
<feature type="chain" id="PRO_0000174158" description="Probable dolichyl pyrophosphate Man9GlcNAc2 alpha-1,3-glucosyltransferase">
    <location>
        <begin position="1"/>
        <end position="475"/>
    </location>
</feature>
<feature type="transmembrane region" description="Helical" evidence="1">
    <location>
        <begin position="114"/>
        <end position="133"/>
    </location>
</feature>
<feature type="transmembrane region" description="Helical" evidence="1">
    <location>
        <begin position="161"/>
        <end position="181"/>
    </location>
</feature>
<feature type="transmembrane region" description="Helical" evidence="1">
    <location>
        <begin position="235"/>
        <end position="255"/>
    </location>
</feature>
<feature type="transmembrane region" description="Helical" evidence="1">
    <location>
        <begin position="296"/>
        <end position="316"/>
    </location>
</feature>
<feature type="transmembrane region" description="Helical" evidence="1">
    <location>
        <begin position="322"/>
        <end position="342"/>
    </location>
</feature>
<feature type="transmembrane region" description="Helical" evidence="1">
    <location>
        <begin position="385"/>
        <end position="405"/>
    </location>
</feature>
<feature type="transmembrane region" description="Helical" evidence="1">
    <location>
        <begin position="418"/>
        <end position="438"/>
    </location>
</feature>
<feature type="transmembrane region" description="Helical" evidence="1">
    <location>
        <begin position="441"/>
        <end position="461"/>
    </location>
</feature>
<organism>
    <name type="scientific">Drosophila melanogaster</name>
    <name type="common">Fruit fly</name>
    <dbReference type="NCBI Taxonomy" id="7227"/>
    <lineage>
        <taxon>Eukaryota</taxon>
        <taxon>Metazoa</taxon>
        <taxon>Ecdysozoa</taxon>
        <taxon>Arthropoda</taxon>
        <taxon>Hexapoda</taxon>
        <taxon>Insecta</taxon>
        <taxon>Pterygota</taxon>
        <taxon>Neoptera</taxon>
        <taxon>Endopterygota</taxon>
        <taxon>Diptera</taxon>
        <taxon>Brachycera</taxon>
        <taxon>Muscomorpha</taxon>
        <taxon>Ephydroidea</taxon>
        <taxon>Drosophilidae</taxon>
        <taxon>Drosophila</taxon>
        <taxon>Sophophora</taxon>
    </lineage>
</organism>
<dbReference type="EC" id="2.4.1.267"/>
<dbReference type="EMBL" id="AE014134">
    <property type="protein sequence ID" value="AAF52930.2"/>
    <property type="molecule type" value="Genomic_DNA"/>
</dbReference>
<dbReference type="EMBL" id="AY051761">
    <property type="protein sequence ID" value="AAK93185.1"/>
    <property type="molecule type" value="mRNA"/>
</dbReference>
<dbReference type="RefSeq" id="NP_001260338.1">
    <property type="nucleotide sequence ID" value="NM_001273409.1"/>
</dbReference>
<dbReference type="RefSeq" id="NP_609393.1">
    <property type="nucleotide sequence ID" value="NM_135549.4"/>
</dbReference>
<dbReference type="SMR" id="Q9VKX7"/>
<dbReference type="FunCoup" id="Q9VKX7">
    <property type="interactions" value="2514"/>
</dbReference>
<dbReference type="STRING" id="7227.FBpp0079595"/>
<dbReference type="CAZy" id="GT57">
    <property type="family name" value="Glycosyltransferase Family 57"/>
</dbReference>
<dbReference type="PaxDb" id="7227-FBpp0079595"/>
<dbReference type="DNASU" id="34409"/>
<dbReference type="EnsemblMetazoa" id="FBtr0080005">
    <property type="protein sequence ID" value="FBpp0079595"/>
    <property type="gene ID" value="FBgn0032234"/>
</dbReference>
<dbReference type="EnsemblMetazoa" id="FBtr0332193">
    <property type="protein sequence ID" value="FBpp0304502"/>
    <property type="gene ID" value="FBgn0032234"/>
</dbReference>
<dbReference type="GeneID" id="34409"/>
<dbReference type="KEGG" id="dme:Dmel_CG5091"/>
<dbReference type="UCSC" id="CG5091-RA">
    <property type="organism name" value="d. melanogaster"/>
</dbReference>
<dbReference type="AGR" id="FB:FBgn0032234"/>
<dbReference type="CTD" id="34409"/>
<dbReference type="FlyBase" id="FBgn0032234">
    <property type="gene designation" value="gny"/>
</dbReference>
<dbReference type="VEuPathDB" id="VectorBase:FBgn0032234"/>
<dbReference type="eggNOG" id="KOG2575">
    <property type="taxonomic scope" value="Eukaryota"/>
</dbReference>
<dbReference type="GeneTree" id="ENSGT00940000153733"/>
<dbReference type="HOGENOM" id="CLU_008110_3_0_1"/>
<dbReference type="InParanoid" id="Q9VKX7"/>
<dbReference type="OMA" id="FQVPPMH"/>
<dbReference type="OrthoDB" id="4983at2759"/>
<dbReference type="PhylomeDB" id="Q9VKX7"/>
<dbReference type="Reactome" id="R-DME-446193">
    <property type="pathway name" value="Biosynthesis of the N-glycan precursor (dolichol lipid-linked oligosaccharide, LLO) and transfer to a nascent protein"/>
</dbReference>
<dbReference type="UniPathway" id="UPA00378"/>
<dbReference type="BioGRID-ORCS" id="34409">
    <property type="hits" value="1 hit in 1 CRISPR screen"/>
</dbReference>
<dbReference type="GenomeRNAi" id="34409"/>
<dbReference type="PRO" id="PR:Q9VKX7"/>
<dbReference type="Proteomes" id="UP000000803">
    <property type="component" value="Chromosome 2L"/>
</dbReference>
<dbReference type="Bgee" id="FBgn0032234">
    <property type="expression patterns" value="Expressed in midgut large flat cell (Drosophila) in digestive tract and 62 other cell types or tissues"/>
</dbReference>
<dbReference type="ExpressionAtlas" id="Q9VKX7">
    <property type="expression patterns" value="baseline and differential"/>
</dbReference>
<dbReference type="GO" id="GO:0005783">
    <property type="term" value="C:endoplasmic reticulum"/>
    <property type="evidence" value="ECO:0000250"/>
    <property type="project" value="FlyBase"/>
</dbReference>
<dbReference type="GO" id="GO:0005789">
    <property type="term" value="C:endoplasmic reticulum membrane"/>
    <property type="evidence" value="ECO:0000318"/>
    <property type="project" value="GO_Central"/>
</dbReference>
<dbReference type="GO" id="GO:0042281">
    <property type="term" value="F:dolichyl pyrophosphate Man9GlcNAc2 alpha-1,3-glucosyltransferase activity"/>
    <property type="evidence" value="ECO:0000318"/>
    <property type="project" value="GO_Central"/>
</dbReference>
<dbReference type="GO" id="GO:0046527">
    <property type="term" value="F:glucosyltransferase activity"/>
    <property type="evidence" value="ECO:0000250"/>
    <property type="project" value="FlyBase"/>
</dbReference>
<dbReference type="GO" id="GO:0040003">
    <property type="term" value="P:chitin-based cuticle development"/>
    <property type="evidence" value="ECO:0000315"/>
    <property type="project" value="FlyBase"/>
</dbReference>
<dbReference type="GO" id="GO:0006488">
    <property type="term" value="P:dolichol-linked oligosaccharide biosynthetic process"/>
    <property type="evidence" value="ECO:0000318"/>
    <property type="project" value="GO_Central"/>
</dbReference>
<dbReference type="GO" id="GO:0006487">
    <property type="term" value="P:protein N-linked glycosylation"/>
    <property type="evidence" value="ECO:0000250"/>
    <property type="project" value="FlyBase"/>
</dbReference>
<dbReference type="InterPro" id="IPR004856">
    <property type="entry name" value="Glyco_trans_ALG6/ALG8"/>
</dbReference>
<dbReference type="PANTHER" id="PTHR12413">
    <property type="entry name" value="DOLICHYL GLYCOSYLTRANSFERASE"/>
    <property type="match status" value="1"/>
</dbReference>
<dbReference type="PANTHER" id="PTHR12413:SF1">
    <property type="entry name" value="DOLICHYL PYROPHOSPHATE MAN9GLCNAC2 ALPHA-1,3-GLUCOSYLTRANSFERASE"/>
    <property type="match status" value="1"/>
</dbReference>
<dbReference type="Pfam" id="PF03155">
    <property type="entry name" value="Alg6_Alg8"/>
    <property type="match status" value="1"/>
</dbReference>
<sequence>MRSEILASAFLGLAVRSIISLYSYSGFDSPPMHGDYEAQRHWQEITVNLAVGEWYTNSSNNDLQYWGLDYPPLTAYHSYLVGRIGASIDPRFVELHKSRGFESKEHKRFMRATVVSADVLIYLPAMLLLAYSLDKAFRSDDKLFLFTLVAAYPGQTLIDNGHFQYNNISLGFAAVAIAAILRRRFYAAAFFFTLALNYKQMELYHSLPFFAFLLGECVSQKSFASFIAEISRIAAVVLGTFAILWVPWLGSLQAVLQVLHRLFPVARGVFEDKVANVWCAVNVVWKLKKHISNDQMALVCIACTLIASLPTNVLLFRRRTNVGFLLALFNTSLAFFLFSFQVHEKTILLTALPALFLLKCWPDEMILFLEVTVFSMLPLLARDELLVPAVVATVAFHLIFKCFDSKSKLSNEYPLKYIANISQILMISVVVASLTVPAPTKYPDLWPLIISVTSCGHFFLFFLWGNVQQFSSKLS</sequence>
<comment type="function">
    <text evidence="2">Adds the first glucose residue to the lipid-linked oligosaccharide precursor for N-linked glycosylation. Transfers glucose from dolichyl phosphate glucose (Dol-P-Glc) onto the lipid-linked oligosaccharide Man(9)GlcNAc(2)-PP-Dol. Involved in cuticle differentiation.</text>
</comment>
<comment type="catalytic activity">
    <reaction>
        <text>an alpha-D-Man-(1-&gt;2)-alpha-D-Man-(1-&gt;2)-alpha-D-Man-(1-&gt;3)-[alpha-D-Man-(1-&gt;2)-alpha-D-Man-(1-&gt;3)-[alpha-D-Man-(1-&gt;2)-alpha-D-Man-(1-&gt;6)]-alpha-D-Man-(1-&gt;6)]-beta-D-Man-(1-&gt;4)-beta-D-GlcNAc-(1-&gt;4)-alpha-D-GlcNAc-diphospho-di-trans,poly-cis-dolichol + a di-trans,poly-cis-dolichyl beta-D-glucosyl phosphate = an alpha-D-Glc-(1-&gt;3)-alpha-D-Man-(1-&gt;2)-alpha-D-Man-(1-&gt;2)-alpha-D-Man-(1-&gt;3)-[alpha-D-Man-(1-&gt;2)-alpha-D-Man-(1-&gt;3)-[alpha-D-Man-(1-&gt;2)-alpha-D-Man-(1-&gt;6)]-alpha-D-Man-(1-&gt;6)]-beta-D-Man-(1-&gt;4)-beta-D-GlcNAc-(1-&gt;4)-alpha-D-GlcNAc-diphospho-di-trans,poly-cis-dolichol + a di-trans,poly-cis-dolichyl phosphate + H(+)</text>
        <dbReference type="Rhea" id="RHEA:30635"/>
        <dbReference type="Rhea" id="RHEA-COMP:19498"/>
        <dbReference type="Rhea" id="RHEA-COMP:19502"/>
        <dbReference type="Rhea" id="RHEA-COMP:19520"/>
        <dbReference type="Rhea" id="RHEA-COMP:19521"/>
        <dbReference type="ChEBI" id="CHEBI:15378"/>
        <dbReference type="ChEBI" id="CHEBI:57525"/>
        <dbReference type="ChEBI" id="CHEBI:57683"/>
        <dbReference type="ChEBI" id="CHEBI:132520"/>
        <dbReference type="ChEBI" id="CHEBI:132521"/>
        <dbReference type="EC" id="2.4.1.267"/>
    </reaction>
</comment>
<comment type="pathway">
    <text>Protein modification; protein glycosylation.</text>
</comment>
<comment type="subcellular location">
    <subcellularLocation>
        <location evidence="3">Endoplasmic reticulum membrane</location>
        <topology evidence="3">Multi-pass membrane protein</topology>
    </subcellularLocation>
</comment>
<comment type="disruption phenotype">
    <text evidence="2">Larval lethality. Larvae lacking maternal gny present patterning and morphological defects, including the failure to form a normal head skeleton, a discontinuous cuticle and irregular body contours. Larvae lacking maternal and zygotic gny show severe reduction in cuticle deposition and a complete failure of denticle formation and melanization.</text>
</comment>
<comment type="similarity">
    <text evidence="3">Belongs to the ALG6/ALG8 glucosyltransferase family.</text>
</comment>
<proteinExistence type="evidence at transcript level"/>
<evidence type="ECO:0000255" key="1"/>
<evidence type="ECO:0000269" key="2">
    <source>
    </source>
</evidence>
<evidence type="ECO:0000305" key="3"/>
<protein>
    <recommendedName>
        <fullName>Probable dolichyl pyrophosphate Man9GlcNAc2 alpha-1,3-glucosyltransferase</fullName>
        <shortName>Dolichyl-P-Glc:Man9GlcNAc2-PP-dolichyl glucosyltransferase</shortName>
        <ecNumber>2.4.1.267</ecNumber>
    </recommendedName>
    <alternativeName>
        <fullName>Asparagine-linked glycosylation protein 6 homolog</fullName>
    </alternativeName>
    <alternativeName>
        <fullName>Dol-P-Glc:Man(9)GlcNAc(2)-PP-Dol alpha-1,3-glucosyltransferase</fullName>
    </alternativeName>
</protein>
<keyword id="KW-0256">Endoplasmic reticulum</keyword>
<keyword id="KW-0328">Glycosyltransferase</keyword>
<keyword id="KW-0472">Membrane</keyword>
<keyword id="KW-1185">Reference proteome</keyword>
<keyword id="KW-0808">Transferase</keyword>
<keyword id="KW-0812">Transmembrane</keyword>
<keyword id="KW-1133">Transmembrane helix</keyword>